<protein>
    <recommendedName>
        <fullName>Lipase</fullName>
        <ecNumber>3.1.1.3</ecNumber>
    </recommendedName>
    <alternativeName>
        <fullName>Glycerol ester hydrolase</fullName>
    </alternativeName>
</protein>
<proteinExistence type="inferred from homology"/>
<gene>
    <name type="primary">lip</name>
    <name type="ordered locus">SE_0281</name>
</gene>
<sequence>MKTRQNKYSIRKFSVGASSILIAALLFMGGGSAQAAEQQQDKGTVENSTTQSIGDGNEKLSEQQSTQNKNVNEKSNVNSITENESLHNETPKNEDWIQQQKDSQNDNKSESVVEQNKENEAFVQNHSEEKPQQEQVELEKHASENNQTLHSKAAQSNEDVKTKPSQLDNTAAKQEDSQKENLSKQDTQSSKTTDLLRATAQNQSKDSQSTEEINKEVNNDTQQVTAKNDDAKVESFNLNSKEEPLKVDKQANPTTDKDKSSKNDKGSQDGLANLESNAVATTNKQSKQQVSEKNEDQTNKSAKQKQYKNNDPIILVHGFNGFTDDINPSVLTHYWGGDKMNIRQDLEENGYEAYEASISAFGSNYDRAVELYYYIKGGRVDYGAAHAAKYGHERYGKTYEGVYKDWKPGQKIHLVGHSMGGQTIRQLEELLRHGNPEEVEYQKQHGGEISPLYQGGHDNMVSSITTLGTPHNGTHASDLLGNEAIVRQLAYDVGKMYGNKDSRVDFGLEHWGLKQKPNESYIQYVKRVQNSKLWKSKDSGLHDLTRDGATDLNRKTSLNPNIVYKTYTGESTHKTLAGKQKADLNMFLPFTITGNLIGKAKEKEWRENDGLVSVISSQHPFNQKYVEATDKNQKGVWQVTPTKHDWDHVDFVGQDSTDTKRTRDELQQFWHGLAEDLVQSEQLTSTNK</sequence>
<keyword id="KW-0106">Calcium</keyword>
<keyword id="KW-0378">Hydrolase</keyword>
<keyword id="KW-0442">Lipid degradation</keyword>
<keyword id="KW-0443">Lipid metabolism</keyword>
<keyword id="KW-0479">Metal-binding</keyword>
<keyword id="KW-0964">Secreted</keyword>
<keyword id="KW-0732">Signal</keyword>
<keyword id="KW-0865">Zymogen</keyword>
<dbReference type="EC" id="3.1.1.3"/>
<dbReference type="EMBL" id="AE015929">
    <property type="protein sequence ID" value="AAO03878.1"/>
    <property type="molecule type" value="Genomic_DNA"/>
</dbReference>
<dbReference type="RefSeq" id="NP_763836.1">
    <property type="nucleotide sequence ID" value="NC_004461.1"/>
</dbReference>
<dbReference type="SMR" id="P0C0R4"/>
<dbReference type="ESTHER" id="staep-lipas">
    <property type="family name" value="Bacterial_lip_FamI.6"/>
</dbReference>
<dbReference type="KEGG" id="sep:SE_0281"/>
<dbReference type="PATRIC" id="fig|176280.10.peg.257"/>
<dbReference type="eggNOG" id="COG1075">
    <property type="taxonomic scope" value="Bacteria"/>
</dbReference>
<dbReference type="HOGENOM" id="CLU_023555_2_1_9"/>
<dbReference type="OrthoDB" id="2004167at2"/>
<dbReference type="Proteomes" id="UP000001411">
    <property type="component" value="Chromosome"/>
</dbReference>
<dbReference type="GO" id="GO:0005576">
    <property type="term" value="C:extracellular region"/>
    <property type="evidence" value="ECO:0007669"/>
    <property type="project" value="UniProtKB-SubCell"/>
</dbReference>
<dbReference type="GO" id="GO:0046872">
    <property type="term" value="F:metal ion binding"/>
    <property type="evidence" value="ECO:0007669"/>
    <property type="project" value="UniProtKB-KW"/>
</dbReference>
<dbReference type="GO" id="GO:0004806">
    <property type="term" value="F:triacylglycerol lipase activity"/>
    <property type="evidence" value="ECO:0007669"/>
    <property type="project" value="UniProtKB-EC"/>
</dbReference>
<dbReference type="GO" id="GO:0016042">
    <property type="term" value="P:lipid catabolic process"/>
    <property type="evidence" value="ECO:0007669"/>
    <property type="project" value="UniProtKB-KW"/>
</dbReference>
<dbReference type="Gene3D" id="3.40.50.1820">
    <property type="entry name" value="alpha/beta hydrolase"/>
    <property type="match status" value="1"/>
</dbReference>
<dbReference type="InterPro" id="IPR029058">
    <property type="entry name" value="AB_hydrolase_fold"/>
</dbReference>
<dbReference type="InterPro" id="IPR056304">
    <property type="entry name" value="Lip-like_C"/>
</dbReference>
<dbReference type="InterPro" id="IPR005877">
    <property type="entry name" value="YSIRK_signal_dom"/>
</dbReference>
<dbReference type="NCBIfam" id="NF047351">
    <property type="entry name" value="lipase_YSIRK_Sa"/>
    <property type="match status" value="1"/>
</dbReference>
<dbReference type="NCBIfam" id="TIGR01168">
    <property type="entry name" value="YSIRK_signal"/>
    <property type="match status" value="1"/>
</dbReference>
<dbReference type="PANTHER" id="PTHR34043">
    <property type="entry name" value="ALPHA/BETA-HYDROLASES SUPERFAMILY PROTEIN"/>
    <property type="match status" value="1"/>
</dbReference>
<dbReference type="PANTHER" id="PTHR34043:SF3">
    <property type="entry name" value="ALPHA_BETA-HYDROLASES SUPERFAMILY PROTEIN"/>
    <property type="match status" value="1"/>
</dbReference>
<dbReference type="Pfam" id="PF24708">
    <property type="entry name" value="Lip_C"/>
    <property type="match status" value="1"/>
</dbReference>
<dbReference type="Pfam" id="PF04650">
    <property type="entry name" value="YSIRK_signal"/>
    <property type="match status" value="1"/>
</dbReference>
<dbReference type="SUPFAM" id="SSF53474">
    <property type="entry name" value="alpha/beta-Hydrolases"/>
    <property type="match status" value="1"/>
</dbReference>
<dbReference type="PROSITE" id="PS00120">
    <property type="entry name" value="LIPASE_SER"/>
    <property type="match status" value="1"/>
</dbReference>
<name>LIP_STAES</name>
<feature type="signal peptide" evidence="2">
    <location>
        <begin position="1"/>
        <end position="35"/>
    </location>
</feature>
<feature type="propeptide" id="PRO_0000042994" description="Removed in mature form" evidence="1">
    <location>
        <begin position="36"/>
        <end position="302"/>
    </location>
</feature>
<feature type="chain" id="PRO_0000042995" description="Lipase">
    <location>
        <begin position="303"/>
        <end position="688"/>
    </location>
</feature>
<feature type="region of interest" description="Disordered" evidence="4">
    <location>
        <begin position="31"/>
        <end position="309"/>
    </location>
</feature>
<feature type="compositionally biased region" description="Polar residues" evidence="4">
    <location>
        <begin position="45"/>
        <end position="54"/>
    </location>
</feature>
<feature type="compositionally biased region" description="Low complexity" evidence="4">
    <location>
        <begin position="68"/>
        <end position="79"/>
    </location>
</feature>
<feature type="compositionally biased region" description="Basic and acidic residues" evidence="4">
    <location>
        <begin position="84"/>
        <end position="95"/>
    </location>
</feature>
<feature type="compositionally biased region" description="Basic and acidic residues" evidence="4">
    <location>
        <begin position="103"/>
        <end position="143"/>
    </location>
</feature>
<feature type="compositionally biased region" description="Polar residues" evidence="4">
    <location>
        <begin position="144"/>
        <end position="172"/>
    </location>
</feature>
<feature type="compositionally biased region" description="Basic and acidic residues" evidence="4">
    <location>
        <begin position="173"/>
        <end position="183"/>
    </location>
</feature>
<feature type="compositionally biased region" description="Polar residues" evidence="4">
    <location>
        <begin position="184"/>
        <end position="211"/>
    </location>
</feature>
<feature type="compositionally biased region" description="Basic and acidic residues" evidence="4">
    <location>
        <begin position="240"/>
        <end position="267"/>
    </location>
</feature>
<feature type="compositionally biased region" description="Polar residues" evidence="4">
    <location>
        <begin position="274"/>
        <end position="289"/>
    </location>
</feature>
<feature type="active site" description="Nucleophile" evidence="1">
    <location>
        <position position="418"/>
    </location>
</feature>
<feature type="active site" description="Charge relay system" evidence="3">
    <location>
        <position position="609"/>
    </location>
</feature>
<feature type="active site" description="Charge relay system" evidence="3">
    <location>
        <position position="648"/>
    </location>
</feature>
<feature type="binding site" evidence="1">
    <location>
        <position position="647"/>
    </location>
    <ligand>
        <name>Ca(2+)</name>
        <dbReference type="ChEBI" id="CHEBI:29108"/>
    </ligand>
</feature>
<feature type="binding site" evidence="1">
    <location>
        <position position="650"/>
    </location>
    <ligand>
        <name>Ca(2+)</name>
        <dbReference type="ChEBI" id="CHEBI:29108"/>
    </ligand>
</feature>
<feature type="binding site" evidence="1">
    <location>
        <position position="655"/>
    </location>
    <ligand>
        <name>Ca(2+)</name>
        <dbReference type="ChEBI" id="CHEBI:29108"/>
    </ligand>
</feature>
<feature type="binding site" evidence="1">
    <location>
        <position position="658"/>
    </location>
    <ligand>
        <name>Ca(2+)</name>
        <dbReference type="ChEBI" id="CHEBI:29108"/>
    </ligand>
</feature>
<evidence type="ECO:0000250" key="1"/>
<evidence type="ECO:0000255" key="2"/>
<evidence type="ECO:0000255" key="3">
    <source>
        <dbReference type="PROSITE-ProRule" id="PRU10037"/>
    </source>
</evidence>
<evidence type="ECO:0000256" key="4">
    <source>
        <dbReference type="SAM" id="MobiDB-lite"/>
    </source>
</evidence>
<evidence type="ECO:0000305" key="5"/>
<comment type="catalytic activity">
    <reaction>
        <text>a triacylglycerol + H2O = a diacylglycerol + a fatty acid + H(+)</text>
        <dbReference type="Rhea" id="RHEA:12044"/>
        <dbReference type="ChEBI" id="CHEBI:15377"/>
        <dbReference type="ChEBI" id="CHEBI:15378"/>
        <dbReference type="ChEBI" id="CHEBI:17855"/>
        <dbReference type="ChEBI" id="CHEBI:18035"/>
        <dbReference type="ChEBI" id="CHEBI:28868"/>
        <dbReference type="EC" id="3.1.1.3"/>
    </reaction>
</comment>
<comment type="subcellular location">
    <subcellularLocation>
        <location evidence="1">Secreted</location>
    </subcellularLocation>
</comment>
<comment type="similarity">
    <text evidence="5">Belongs to the AB hydrolase superfamily. Lipase family.</text>
</comment>
<organism>
    <name type="scientific">Staphylococcus epidermidis (strain ATCC 12228 / FDA PCI 1200)</name>
    <dbReference type="NCBI Taxonomy" id="176280"/>
    <lineage>
        <taxon>Bacteria</taxon>
        <taxon>Bacillati</taxon>
        <taxon>Bacillota</taxon>
        <taxon>Bacilli</taxon>
        <taxon>Bacillales</taxon>
        <taxon>Staphylococcaceae</taxon>
        <taxon>Staphylococcus</taxon>
    </lineage>
</organism>
<accession>P0C0R4</accession>
<accession>Q02510</accession>
<reference key="1">
    <citation type="journal article" date="2003" name="Mol. Microbiol.">
        <title>Genome-based analysis of virulence genes in a non-biofilm-forming Staphylococcus epidermidis strain (ATCC 12228).</title>
        <authorList>
            <person name="Zhang Y.-Q."/>
            <person name="Ren S.-X."/>
            <person name="Li H.-L."/>
            <person name="Wang Y.-X."/>
            <person name="Fu G."/>
            <person name="Yang J."/>
            <person name="Qin Z.-Q."/>
            <person name="Miao Y.-G."/>
            <person name="Wang W.-Y."/>
            <person name="Chen R.-S."/>
            <person name="Shen Y."/>
            <person name="Chen Z."/>
            <person name="Yuan Z.-H."/>
            <person name="Zhao G.-P."/>
            <person name="Qu D."/>
            <person name="Danchin A."/>
            <person name="Wen Y.-M."/>
        </authorList>
    </citation>
    <scope>NUCLEOTIDE SEQUENCE [LARGE SCALE GENOMIC DNA]</scope>
    <source>
        <strain>ATCC 12228 / FDA PCI 1200</strain>
    </source>
</reference>